<protein>
    <recommendedName>
        <fullName evidence="1">NADH-quinone oxidoreductase subunit D 1</fullName>
        <ecNumber evidence="1">7.1.1.-</ecNumber>
    </recommendedName>
    <alternativeName>
        <fullName evidence="1">NADH dehydrogenase I subunit D 1</fullName>
    </alternativeName>
    <alternativeName>
        <fullName evidence="1">NDH-1 subunit D 1</fullName>
    </alternativeName>
</protein>
<proteinExistence type="inferred from homology"/>
<feature type="chain" id="PRO_0000357923" description="NADH-quinone oxidoreductase subunit D 1">
    <location>
        <begin position="1"/>
        <end position="441"/>
    </location>
</feature>
<organism>
    <name type="scientific">Salinispora arenicola (strain CNS-205)</name>
    <dbReference type="NCBI Taxonomy" id="391037"/>
    <lineage>
        <taxon>Bacteria</taxon>
        <taxon>Bacillati</taxon>
        <taxon>Actinomycetota</taxon>
        <taxon>Actinomycetes</taxon>
        <taxon>Micromonosporales</taxon>
        <taxon>Micromonosporaceae</taxon>
        <taxon>Salinispora</taxon>
    </lineage>
</organism>
<name>NUOD1_SALAI</name>
<gene>
    <name evidence="1" type="primary">nuoD1</name>
    <name type="ordered locus">Sare_4460</name>
</gene>
<accession>A8M619</accession>
<dbReference type="EC" id="7.1.1.-" evidence="1"/>
<dbReference type="EMBL" id="CP000850">
    <property type="protein sequence ID" value="ABW00235.1"/>
    <property type="molecule type" value="Genomic_DNA"/>
</dbReference>
<dbReference type="SMR" id="A8M619"/>
<dbReference type="STRING" id="391037.Sare_4460"/>
<dbReference type="KEGG" id="saq:Sare_4460"/>
<dbReference type="PATRIC" id="fig|391037.6.peg.4504"/>
<dbReference type="eggNOG" id="COG0649">
    <property type="taxonomic scope" value="Bacteria"/>
</dbReference>
<dbReference type="HOGENOM" id="CLU_015134_1_2_11"/>
<dbReference type="OrthoDB" id="9801496at2"/>
<dbReference type="GO" id="GO:0005886">
    <property type="term" value="C:plasma membrane"/>
    <property type="evidence" value="ECO:0007669"/>
    <property type="project" value="UniProtKB-SubCell"/>
</dbReference>
<dbReference type="GO" id="GO:0051287">
    <property type="term" value="F:NAD binding"/>
    <property type="evidence" value="ECO:0007669"/>
    <property type="project" value="InterPro"/>
</dbReference>
<dbReference type="GO" id="GO:0050136">
    <property type="term" value="F:NADH:ubiquinone reductase (non-electrogenic) activity"/>
    <property type="evidence" value="ECO:0007669"/>
    <property type="project" value="UniProtKB-UniRule"/>
</dbReference>
<dbReference type="GO" id="GO:0048038">
    <property type="term" value="F:quinone binding"/>
    <property type="evidence" value="ECO:0007669"/>
    <property type="project" value="UniProtKB-KW"/>
</dbReference>
<dbReference type="Gene3D" id="1.10.645.10">
    <property type="entry name" value="Cytochrome-c3 Hydrogenase, chain B"/>
    <property type="match status" value="1"/>
</dbReference>
<dbReference type="HAMAP" id="MF_01358">
    <property type="entry name" value="NDH1_NuoD"/>
    <property type="match status" value="1"/>
</dbReference>
<dbReference type="InterPro" id="IPR001135">
    <property type="entry name" value="NADH_Q_OxRdtase_suD"/>
</dbReference>
<dbReference type="InterPro" id="IPR014029">
    <property type="entry name" value="NADH_UbQ_OxRdtase_49kDa_CS"/>
</dbReference>
<dbReference type="InterPro" id="IPR022885">
    <property type="entry name" value="NDH1_su_D/H"/>
</dbReference>
<dbReference type="InterPro" id="IPR029014">
    <property type="entry name" value="NiFe-Hase_large"/>
</dbReference>
<dbReference type="NCBIfam" id="TIGR01962">
    <property type="entry name" value="NuoD"/>
    <property type="match status" value="1"/>
</dbReference>
<dbReference type="NCBIfam" id="NF004739">
    <property type="entry name" value="PRK06075.1"/>
    <property type="match status" value="1"/>
</dbReference>
<dbReference type="PANTHER" id="PTHR11993:SF10">
    <property type="entry name" value="NADH DEHYDROGENASE [UBIQUINONE] IRON-SULFUR PROTEIN 2, MITOCHONDRIAL"/>
    <property type="match status" value="1"/>
</dbReference>
<dbReference type="PANTHER" id="PTHR11993">
    <property type="entry name" value="NADH-UBIQUINONE OXIDOREDUCTASE 49 KDA SUBUNIT"/>
    <property type="match status" value="1"/>
</dbReference>
<dbReference type="Pfam" id="PF00346">
    <property type="entry name" value="Complex1_49kDa"/>
    <property type="match status" value="1"/>
</dbReference>
<dbReference type="SUPFAM" id="SSF56762">
    <property type="entry name" value="HydB/Nqo4-like"/>
    <property type="match status" value="1"/>
</dbReference>
<dbReference type="PROSITE" id="PS00535">
    <property type="entry name" value="COMPLEX1_49K"/>
    <property type="match status" value="1"/>
</dbReference>
<comment type="function">
    <text evidence="1">NDH-1 shuttles electrons from NADH, via FMN and iron-sulfur (Fe-S) centers, to quinones in the respiratory chain. The immediate electron acceptor for the enzyme in this species is believed to be a menaquinone. Couples the redox reaction to proton translocation (for every two electrons transferred, four hydrogen ions are translocated across the cytoplasmic membrane), and thus conserves the redox energy in a proton gradient.</text>
</comment>
<comment type="catalytic activity">
    <reaction evidence="1">
        <text>a quinone + NADH + 5 H(+)(in) = a quinol + NAD(+) + 4 H(+)(out)</text>
        <dbReference type="Rhea" id="RHEA:57888"/>
        <dbReference type="ChEBI" id="CHEBI:15378"/>
        <dbReference type="ChEBI" id="CHEBI:24646"/>
        <dbReference type="ChEBI" id="CHEBI:57540"/>
        <dbReference type="ChEBI" id="CHEBI:57945"/>
        <dbReference type="ChEBI" id="CHEBI:132124"/>
    </reaction>
</comment>
<comment type="subunit">
    <text evidence="1">NDH-1 is composed of 14 different subunits. Subunits NuoB, C, D, E, F, and G constitute the peripheral sector of the complex.</text>
</comment>
<comment type="subcellular location">
    <subcellularLocation>
        <location evidence="1">Cell membrane</location>
        <topology evidence="1">Peripheral membrane protein</topology>
        <orientation evidence="1">Cytoplasmic side</orientation>
    </subcellularLocation>
</comment>
<comment type="similarity">
    <text evidence="1">Belongs to the complex I 49 kDa subunit family.</text>
</comment>
<keyword id="KW-1003">Cell membrane</keyword>
<keyword id="KW-0472">Membrane</keyword>
<keyword id="KW-0520">NAD</keyword>
<keyword id="KW-0874">Quinone</keyword>
<keyword id="KW-1278">Translocase</keyword>
<keyword id="KW-0813">Transport</keyword>
<evidence type="ECO:0000255" key="1">
    <source>
        <dbReference type="HAMAP-Rule" id="MF_01358"/>
    </source>
</evidence>
<sequence>MSASNYATERETAEGKVFTVTGGDWDVVVSGTDPINDERIVVNMGPQHPSTHGVLRLVLELEGETVREARSVVGYLHTGIEKNLEFRNWVQGSTFVTRMDYLAPLFNETAYALAVEKLLGIEEQITERATTIRVLMMELNRISSHLVWVATTAMELGAINMMLYGFREREYILEIFELITGLRMNHAYVRPGGVAQDVPDEAIAKIRDFLKLMPKKLEEYEKMLSGQPIWLERTQNVGVLDATGCLALGVTGPVLRSAGLAWDLRKTMPYCGYETYEFDVPTHTDGDVWGRYLVRLAEIRESLKLVEQAVDRLRPGPVMVADRKIAWPAQLAIGVDGMGNSLEHVAKIMGQSMESLIHHFKLVTEGFRVPPGQVYVALEAPRGELGVHAVSDGGTRPYRVHYREPSFVNLQALPAMAEGGLIADVIAGGASLDPVMGGCDR</sequence>
<reference key="1">
    <citation type="submission" date="2007-10" db="EMBL/GenBank/DDBJ databases">
        <title>Complete sequence of Salinispora arenicola CNS-205.</title>
        <authorList>
            <consortium name="US DOE Joint Genome Institute"/>
            <person name="Copeland A."/>
            <person name="Lucas S."/>
            <person name="Lapidus A."/>
            <person name="Barry K."/>
            <person name="Glavina del Rio T."/>
            <person name="Dalin E."/>
            <person name="Tice H."/>
            <person name="Pitluck S."/>
            <person name="Foster B."/>
            <person name="Schmutz J."/>
            <person name="Larimer F."/>
            <person name="Land M."/>
            <person name="Hauser L."/>
            <person name="Kyrpides N."/>
            <person name="Ivanova N."/>
            <person name="Jensen P.R."/>
            <person name="Moore B.S."/>
            <person name="Penn K."/>
            <person name="Jenkins C."/>
            <person name="Udwary D."/>
            <person name="Xiang L."/>
            <person name="Gontang E."/>
            <person name="Richardson P."/>
        </authorList>
    </citation>
    <scope>NUCLEOTIDE SEQUENCE [LARGE SCALE GENOMIC DNA]</scope>
    <source>
        <strain>CNS-205</strain>
    </source>
</reference>